<sequence>MLTTSSSTMLGKYGWQILRRLASKSWEHTRQRKKPSGAGSRVLTDAREVFEFNAWDHVQWDEEQELAAKAAVAKNSTSKMEAEQKERFQTDAPKFWDSFYGIHDNRFFKDRHWLFTEFPELAPLAADSAVLQPRSIFELGCGVGNTILPLLQYSSEPQLKVFGCDFSARAIEILRSQRQFDEKRCEVFVMDATLDHWQVPFEENSQDIIVMIFVLSAIEPKKMQRVLDNCYRYLRPGGLLLFRDYGRYDLAQLRFKSGKCMEDNFYVRGDGTMVYFFTEEELRGMMTQAGLQEEQLIVDRRLQVNRCRGLKMYRVWIQTKFRKPL</sequence>
<name>MET2_DROME</name>
<accession>Q86BS6</accession>
<accession>Q960S9</accession>
<accession>Q9W0C0</accession>
<comment type="function">
    <text>Probable methyltransferase.</text>
</comment>
<comment type="subunit">
    <text evidence="3">Interacts with Psn.</text>
</comment>
<comment type="alternative products">
    <event type="alternative splicing"/>
    <isoform>
        <id>Q86BS6-1</id>
        <name>1</name>
        <name>B</name>
        <sequence type="displayed"/>
    </isoform>
    <isoform>
        <id>Q86BS6-2</id>
        <name>2</name>
        <name>Metl-a</name>
        <sequence type="described" ref="VSP_008484"/>
    </isoform>
    <isoform>
        <id>Q86BS6-3</id>
        <name>3</name>
        <name>A</name>
        <sequence type="described" ref="VSP_008483"/>
    </isoform>
</comment>
<comment type="tissue specificity">
    <text evidence="3">Widely expressed. Expressed in ovaries, head, thorax and abdomen of adult flies, and in the CNS of third instar larvae. Isoform 2 is predominantly expressed in larvae and in adult tissues that have been tested.</text>
</comment>
<comment type="developmental stage">
    <text>Expressed throughout embryogenesis, as well as in larvae and adults.</text>
</comment>
<comment type="similarity">
    <text evidence="6">Belongs to the methyltransferase superfamily. METL family.</text>
</comment>
<reference key="1">
    <citation type="journal article" date="2000" name="Science">
        <title>The genome sequence of Drosophila melanogaster.</title>
        <authorList>
            <person name="Adams M.D."/>
            <person name="Celniker S.E."/>
            <person name="Holt R.A."/>
            <person name="Evans C.A."/>
            <person name="Gocayne J.D."/>
            <person name="Amanatides P.G."/>
            <person name="Scherer S.E."/>
            <person name="Li P.W."/>
            <person name="Hoskins R.A."/>
            <person name="Galle R.F."/>
            <person name="George R.A."/>
            <person name="Lewis S.E."/>
            <person name="Richards S."/>
            <person name="Ashburner M."/>
            <person name="Henderson S.N."/>
            <person name="Sutton G.G."/>
            <person name="Wortman J.R."/>
            <person name="Yandell M.D."/>
            <person name="Zhang Q."/>
            <person name="Chen L.X."/>
            <person name="Brandon R.C."/>
            <person name="Rogers Y.-H.C."/>
            <person name="Blazej R.G."/>
            <person name="Champe M."/>
            <person name="Pfeiffer B.D."/>
            <person name="Wan K.H."/>
            <person name="Doyle C."/>
            <person name="Baxter E.G."/>
            <person name="Helt G."/>
            <person name="Nelson C.R."/>
            <person name="Miklos G.L.G."/>
            <person name="Abril J.F."/>
            <person name="Agbayani A."/>
            <person name="An H.-J."/>
            <person name="Andrews-Pfannkoch C."/>
            <person name="Baldwin D."/>
            <person name="Ballew R.M."/>
            <person name="Basu A."/>
            <person name="Baxendale J."/>
            <person name="Bayraktaroglu L."/>
            <person name="Beasley E.M."/>
            <person name="Beeson K.Y."/>
            <person name="Benos P.V."/>
            <person name="Berman B.P."/>
            <person name="Bhandari D."/>
            <person name="Bolshakov S."/>
            <person name="Borkova D."/>
            <person name="Botchan M.R."/>
            <person name="Bouck J."/>
            <person name="Brokstein P."/>
            <person name="Brottier P."/>
            <person name="Burtis K.C."/>
            <person name="Busam D.A."/>
            <person name="Butler H."/>
            <person name="Cadieu E."/>
            <person name="Center A."/>
            <person name="Chandra I."/>
            <person name="Cherry J.M."/>
            <person name="Cawley S."/>
            <person name="Dahlke C."/>
            <person name="Davenport L.B."/>
            <person name="Davies P."/>
            <person name="de Pablos B."/>
            <person name="Delcher A."/>
            <person name="Deng Z."/>
            <person name="Mays A.D."/>
            <person name="Dew I."/>
            <person name="Dietz S.M."/>
            <person name="Dodson K."/>
            <person name="Doup L.E."/>
            <person name="Downes M."/>
            <person name="Dugan-Rocha S."/>
            <person name="Dunkov B.C."/>
            <person name="Dunn P."/>
            <person name="Durbin K.J."/>
            <person name="Evangelista C.C."/>
            <person name="Ferraz C."/>
            <person name="Ferriera S."/>
            <person name="Fleischmann W."/>
            <person name="Fosler C."/>
            <person name="Gabrielian A.E."/>
            <person name="Garg N.S."/>
            <person name="Gelbart W.M."/>
            <person name="Glasser K."/>
            <person name="Glodek A."/>
            <person name="Gong F."/>
            <person name="Gorrell J.H."/>
            <person name="Gu Z."/>
            <person name="Guan P."/>
            <person name="Harris M."/>
            <person name="Harris N.L."/>
            <person name="Harvey D.A."/>
            <person name="Heiman T.J."/>
            <person name="Hernandez J.R."/>
            <person name="Houck J."/>
            <person name="Hostin D."/>
            <person name="Houston K.A."/>
            <person name="Howland T.J."/>
            <person name="Wei M.-H."/>
            <person name="Ibegwam C."/>
            <person name="Jalali M."/>
            <person name="Kalush F."/>
            <person name="Karpen G.H."/>
            <person name="Ke Z."/>
            <person name="Kennison J.A."/>
            <person name="Ketchum K.A."/>
            <person name="Kimmel B.E."/>
            <person name="Kodira C.D."/>
            <person name="Kraft C.L."/>
            <person name="Kravitz S."/>
            <person name="Kulp D."/>
            <person name="Lai Z."/>
            <person name="Lasko P."/>
            <person name="Lei Y."/>
            <person name="Levitsky A.A."/>
            <person name="Li J.H."/>
            <person name="Li Z."/>
            <person name="Liang Y."/>
            <person name="Lin X."/>
            <person name="Liu X."/>
            <person name="Mattei B."/>
            <person name="McIntosh T.C."/>
            <person name="McLeod M.P."/>
            <person name="McPherson D."/>
            <person name="Merkulov G."/>
            <person name="Milshina N.V."/>
            <person name="Mobarry C."/>
            <person name="Morris J."/>
            <person name="Moshrefi A."/>
            <person name="Mount S.M."/>
            <person name="Moy M."/>
            <person name="Murphy B."/>
            <person name="Murphy L."/>
            <person name="Muzny D.M."/>
            <person name="Nelson D.L."/>
            <person name="Nelson D.R."/>
            <person name="Nelson K.A."/>
            <person name="Nixon K."/>
            <person name="Nusskern D.R."/>
            <person name="Pacleb J.M."/>
            <person name="Palazzolo M."/>
            <person name="Pittman G.S."/>
            <person name="Pan S."/>
            <person name="Pollard J."/>
            <person name="Puri V."/>
            <person name="Reese M.G."/>
            <person name="Reinert K."/>
            <person name="Remington K."/>
            <person name="Saunders R.D.C."/>
            <person name="Scheeler F."/>
            <person name="Shen H."/>
            <person name="Shue B.C."/>
            <person name="Siden-Kiamos I."/>
            <person name="Simpson M."/>
            <person name="Skupski M.P."/>
            <person name="Smith T.J."/>
            <person name="Spier E."/>
            <person name="Spradling A.C."/>
            <person name="Stapleton M."/>
            <person name="Strong R."/>
            <person name="Sun E."/>
            <person name="Svirskas R."/>
            <person name="Tector C."/>
            <person name="Turner R."/>
            <person name="Venter E."/>
            <person name="Wang A.H."/>
            <person name="Wang X."/>
            <person name="Wang Z.-Y."/>
            <person name="Wassarman D.A."/>
            <person name="Weinstock G.M."/>
            <person name="Weissenbach J."/>
            <person name="Williams S.M."/>
            <person name="Woodage T."/>
            <person name="Worley K.C."/>
            <person name="Wu D."/>
            <person name="Yang S."/>
            <person name="Yao Q.A."/>
            <person name="Ye J."/>
            <person name="Yeh R.-F."/>
            <person name="Zaveri J.S."/>
            <person name="Zhan M."/>
            <person name="Zhang G."/>
            <person name="Zhao Q."/>
            <person name="Zheng L."/>
            <person name="Zheng X.H."/>
            <person name="Zhong F.N."/>
            <person name="Zhong W."/>
            <person name="Zhou X."/>
            <person name="Zhu S.C."/>
            <person name="Zhu X."/>
            <person name="Smith H.O."/>
            <person name="Gibbs R.A."/>
            <person name="Myers E.W."/>
            <person name="Rubin G.M."/>
            <person name="Venter J.C."/>
        </authorList>
    </citation>
    <scope>NUCLEOTIDE SEQUENCE [LARGE SCALE GENOMIC DNA]</scope>
    <source>
        <strain>Berkeley</strain>
    </source>
</reference>
<reference key="2">
    <citation type="journal article" date="2002" name="Genome Biol.">
        <title>Annotation of the Drosophila melanogaster euchromatic genome: a systematic review.</title>
        <authorList>
            <person name="Misra S."/>
            <person name="Crosby M.A."/>
            <person name="Mungall C.J."/>
            <person name="Matthews B.B."/>
            <person name="Campbell K.S."/>
            <person name="Hradecky P."/>
            <person name="Huang Y."/>
            <person name="Kaminker J.S."/>
            <person name="Millburn G.H."/>
            <person name="Prochnik S.E."/>
            <person name="Smith C.D."/>
            <person name="Tupy J.L."/>
            <person name="Whitfield E.J."/>
            <person name="Bayraktaroglu L."/>
            <person name="Berman B.P."/>
            <person name="Bettencourt B.R."/>
            <person name="Celniker S.E."/>
            <person name="de Grey A.D.N.J."/>
            <person name="Drysdale R.A."/>
            <person name="Harris N.L."/>
            <person name="Richter J."/>
            <person name="Russo S."/>
            <person name="Schroeder A.J."/>
            <person name="Shu S.Q."/>
            <person name="Stapleton M."/>
            <person name="Yamada C."/>
            <person name="Ashburner M."/>
            <person name="Gelbart W.M."/>
            <person name="Rubin G.M."/>
            <person name="Lewis S.E."/>
        </authorList>
    </citation>
    <scope>GENOME REANNOTATION</scope>
    <scope>ALTERNATIVE SPLICING</scope>
    <source>
        <strain>Berkeley</strain>
    </source>
</reference>
<reference key="3">
    <citation type="journal article" date="2002" name="Genome Biol.">
        <title>A Drosophila full-length cDNA resource.</title>
        <authorList>
            <person name="Stapleton M."/>
            <person name="Carlson J.W."/>
            <person name="Brokstein P."/>
            <person name="Yu C."/>
            <person name="Champe M."/>
            <person name="George R.A."/>
            <person name="Guarin H."/>
            <person name="Kronmiller B."/>
            <person name="Pacleb J.M."/>
            <person name="Park S."/>
            <person name="Wan K.H."/>
            <person name="Rubin G.M."/>
            <person name="Celniker S.E."/>
        </authorList>
    </citation>
    <scope>NUCLEOTIDE SEQUENCE [LARGE SCALE MRNA] (ISOFORMS 1 AND 3)</scope>
    <source>
        <strain>Berkeley</strain>
        <tissue>Embryo</tissue>
    </source>
</reference>
<reference key="4">
    <citation type="journal article" date="2001" name="Gene">
        <title>Identification of a novel family of putative methyltransferases that interact with human and Drosophila presenilins.</title>
        <authorList>
            <person name="Zhang S.X."/>
            <person name="Guo Y."/>
            <person name="Boulianne G.L."/>
        </authorList>
    </citation>
    <scope>ALTERNATIVE SPLICING (ISOFORMS 1 AND 2)</scope>
    <scope>TISSUE SPECIFICITY</scope>
    <scope>INTERACTION WITH PSN</scope>
</reference>
<organism>
    <name type="scientific">Drosophila melanogaster</name>
    <name type="common">Fruit fly</name>
    <dbReference type="NCBI Taxonomy" id="7227"/>
    <lineage>
        <taxon>Eukaryota</taxon>
        <taxon>Metazoa</taxon>
        <taxon>Ecdysozoa</taxon>
        <taxon>Arthropoda</taxon>
        <taxon>Hexapoda</taxon>
        <taxon>Insecta</taxon>
        <taxon>Pterygota</taxon>
        <taxon>Neoptera</taxon>
        <taxon>Endopterygota</taxon>
        <taxon>Diptera</taxon>
        <taxon>Brachycera</taxon>
        <taxon>Muscomorpha</taxon>
        <taxon>Ephydroidea</taxon>
        <taxon>Drosophilidae</taxon>
        <taxon>Drosophila</taxon>
        <taxon>Sophophora</taxon>
    </lineage>
</organism>
<proteinExistence type="evidence at protein level"/>
<evidence type="ECO:0000250" key="1">
    <source>
        <dbReference type="UniProtKB" id="Q8TCB7"/>
    </source>
</evidence>
<evidence type="ECO:0000250" key="2">
    <source>
        <dbReference type="UniProtKB" id="Q96IZ6"/>
    </source>
</evidence>
<evidence type="ECO:0000269" key="3">
    <source>
    </source>
</evidence>
<evidence type="ECO:0000303" key="4">
    <source>
    </source>
</evidence>
<evidence type="ECO:0000303" key="5">
    <source>
    </source>
</evidence>
<evidence type="ECO:0000305" key="6"/>
<evidence type="ECO:0000312" key="7">
    <source>
        <dbReference type="FlyBase" id="FBgn0035247"/>
    </source>
</evidence>
<protein>
    <recommendedName>
        <fullName evidence="6">tRNA N(3)-methylcytidine methyltransferase Mettl2</fullName>
        <ecNumber evidence="2">2.1.1.-</ecNumber>
    </recommendedName>
    <alternativeName>
        <fullName evidence="7">Methyltransferase-like protein 2</fullName>
    </alternativeName>
</protein>
<dbReference type="EC" id="2.1.1.-" evidence="2"/>
<dbReference type="EMBL" id="AE014296">
    <property type="protein sequence ID" value="AAF47531.2"/>
    <property type="molecule type" value="Genomic_DNA"/>
</dbReference>
<dbReference type="EMBL" id="AE014296">
    <property type="protein sequence ID" value="AAF47532.2"/>
    <property type="molecule type" value="Genomic_DNA"/>
</dbReference>
<dbReference type="EMBL" id="AY051875">
    <property type="protein sequence ID" value="AAK93299.1"/>
    <property type="molecule type" value="mRNA"/>
</dbReference>
<dbReference type="RefSeq" id="NP_647636.3">
    <molecule id="Q86BS6-1"/>
    <property type="nucleotide sequence ID" value="NM_139379.4"/>
</dbReference>
<dbReference type="RefSeq" id="NP_728647.2">
    <molecule id="Q86BS6-3"/>
    <property type="nucleotide sequence ID" value="NM_167907.3"/>
</dbReference>
<dbReference type="SMR" id="Q86BS6"/>
<dbReference type="BioGRID" id="63731">
    <property type="interactions" value="14"/>
</dbReference>
<dbReference type="FunCoup" id="Q86BS6">
    <property type="interactions" value="823"/>
</dbReference>
<dbReference type="IntAct" id="Q86BS6">
    <property type="interactions" value="10"/>
</dbReference>
<dbReference type="STRING" id="7227.FBpp0072696"/>
<dbReference type="PaxDb" id="7227-FBpp0072696"/>
<dbReference type="DNASU" id="38197"/>
<dbReference type="EnsemblMetazoa" id="FBtr0072813">
    <molecule id="Q86BS6-3"/>
    <property type="protein sequence ID" value="FBpp0072695"/>
    <property type="gene ID" value="FBgn0035247"/>
</dbReference>
<dbReference type="EnsemblMetazoa" id="FBtr0072814">
    <molecule id="Q86BS6-1"/>
    <property type="protein sequence ID" value="FBpp0072696"/>
    <property type="gene ID" value="FBgn0035247"/>
</dbReference>
<dbReference type="GeneID" id="38197"/>
<dbReference type="KEGG" id="dme:Dmel_CG13929"/>
<dbReference type="UCSC" id="CG13929-RA">
    <molecule id="Q86BS6-1"/>
    <property type="organism name" value="d. melanogaster"/>
</dbReference>
<dbReference type="AGR" id="FB:FBgn0035247"/>
<dbReference type="CTD" id="52686"/>
<dbReference type="FlyBase" id="FBgn0035247">
    <property type="gene designation" value="Mettl2"/>
</dbReference>
<dbReference type="VEuPathDB" id="VectorBase:FBgn0035247"/>
<dbReference type="eggNOG" id="KOG2361">
    <property type="taxonomic scope" value="Eukaryota"/>
</dbReference>
<dbReference type="GeneTree" id="ENSGT00940000171213"/>
<dbReference type="InParanoid" id="Q86BS6"/>
<dbReference type="OMA" id="KHNACKT"/>
<dbReference type="OrthoDB" id="417697at2759"/>
<dbReference type="PhylomeDB" id="Q86BS6"/>
<dbReference type="SignaLink" id="Q86BS6"/>
<dbReference type="BioGRID-ORCS" id="38197">
    <property type="hits" value="0 hits in 3 CRISPR screens"/>
</dbReference>
<dbReference type="GenomeRNAi" id="38197"/>
<dbReference type="PRO" id="PR:Q86BS6"/>
<dbReference type="Proteomes" id="UP000000803">
    <property type="component" value="Chromosome 3L"/>
</dbReference>
<dbReference type="Bgee" id="FBgn0035247">
    <property type="expression patterns" value="Expressed in oviduct (Drosophila) and 62 other cell types or tissues"/>
</dbReference>
<dbReference type="ExpressionAtlas" id="Q86BS6">
    <property type="expression patterns" value="baseline and differential"/>
</dbReference>
<dbReference type="GO" id="GO:0005737">
    <property type="term" value="C:cytoplasm"/>
    <property type="evidence" value="ECO:0000250"/>
    <property type="project" value="FlyBase"/>
</dbReference>
<dbReference type="GO" id="GO:0005759">
    <property type="term" value="C:mitochondrial matrix"/>
    <property type="evidence" value="ECO:0000250"/>
    <property type="project" value="FlyBase"/>
</dbReference>
<dbReference type="GO" id="GO:0016427">
    <property type="term" value="F:tRNA (cytidine) methyltransferase activity"/>
    <property type="evidence" value="ECO:0000250"/>
    <property type="project" value="FlyBase"/>
</dbReference>
<dbReference type="GO" id="GO:0052735">
    <property type="term" value="F:tRNA (cytidine-3-)-methyltransferase activity"/>
    <property type="evidence" value="ECO:0000318"/>
    <property type="project" value="GO_Central"/>
</dbReference>
<dbReference type="GO" id="GO:0030488">
    <property type="term" value="P:tRNA methylation"/>
    <property type="evidence" value="ECO:0000250"/>
    <property type="project" value="FlyBase"/>
</dbReference>
<dbReference type="CDD" id="cd02440">
    <property type="entry name" value="AdoMet_MTases"/>
    <property type="match status" value="1"/>
</dbReference>
<dbReference type="FunFam" id="3.40.50.150:FF:000145">
    <property type="entry name" value="Methyltransferase-like protein"/>
    <property type="match status" value="1"/>
</dbReference>
<dbReference type="Gene3D" id="3.40.50.150">
    <property type="entry name" value="Vaccinia Virus protein VP39"/>
    <property type="match status" value="1"/>
</dbReference>
<dbReference type="InterPro" id="IPR013217">
    <property type="entry name" value="Methyltransf_12"/>
</dbReference>
<dbReference type="InterPro" id="IPR026113">
    <property type="entry name" value="METTL2/6/8-like"/>
</dbReference>
<dbReference type="InterPro" id="IPR029063">
    <property type="entry name" value="SAM-dependent_MTases_sf"/>
</dbReference>
<dbReference type="PANTHER" id="PTHR22809">
    <property type="entry name" value="METHYLTRANSFERASE-RELATED"/>
    <property type="match status" value="1"/>
</dbReference>
<dbReference type="PANTHER" id="PTHR22809:SF11">
    <property type="entry name" value="TRNA N(3)-METHYLCYTIDINE METHYLTRANSFERASE METTL2"/>
    <property type="match status" value="1"/>
</dbReference>
<dbReference type="Pfam" id="PF08242">
    <property type="entry name" value="Methyltransf_12"/>
    <property type="match status" value="1"/>
</dbReference>
<dbReference type="PIRSF" id="PIRSF037755">
    <property type="entry name" value="Mettl2_prd"/>
    <property type="match status" value="1"/>
</dbReference>
<dbReference type="SUPFAM" id="SSF53335">
    <property type="entry name" value="S-adenosyl-L-methionine-dependent methyltransferases"/>
    <property type="match status" value="1"/>
</dbReference>
<keyword id="KW-0025">Alternative splicing</keyword>
<keyword id="KW-0489">Methyltransferase</keyword>
<keyword id="KW-1185">Reference proteome</keyword>
<keyword id="KW-0808">Transferase</keyword>
<feature type="chain" id="PRO_0000204456" description="tRNA N(3)-methylcytidine methyltransferase Mettl2">
    <location>
        <begin position="1"/>
        <end position="325"/>
    </location>
</feature>
<feature type="binding site" evidence="1">
    <location>
        <position position="96"/>
    </location>
    <ligand>
        <name>S-adenosyl-L-methionine</name>
        <dbReference type="ChEBI" id="CHEBI:59789"/>
    </ligand>
</feature>
<feature type="binding site" evidence="1">
    <location>
        <position position="100"/>
    </location>
    <ligand>
        <name>S-adenosyl-L-homocysteine</name>
        <dbReference type="ChEBI" id="CHEBI:57856"/>
    </ligand>
</feature>
<feature type="binding site" evidence="1">
    <location>
        <position position="100"/>
    </location>
    <ligand>
        <name>S-adenosyl-L-methionine</name>
        <dbReference type="ChEBI" id="CHEBI:59789"/>
    </ligand>
</feature>
<feature type="binding site" evidence="1">
    <location>
        <position position="112"/>
    </location>
    <ligand>
        <name>S-adenosyl-L-homocysteine</name>
        <dbReference type="ChEBI" id="CHEBI:57856"/>
    </ligand>
</feature>
<feature type="binding site" evidence="1">
    <location>
        <position position="138"/>
    </location>
    <ligand>
        <name>S-adenosyl-L-homocysteine</name>
        <dbReference type="ChEBI" id="CHEBI:57856"/>
    </ligand>
</feature>
<feature type="binding site" evidence="1">
    <location>
        <position position="140"/>
    </location>
    <ligand>
        <name>S-adenosyl-L-homocysteine</name>
        <dbReference type="ChEBI" id="CHEBI:57856"/>
    </ligand>
</feature>
<feature type="binding site" evidence="1">
    <location>
        <position position="140"/>
    </location>
    <ligand>
        <name>S-adenosyl-L-methionine</name>
        <dbReference type="ChEBI" id="CHEBI:59789"/>
    </ligand>
</feature>
<feature type="binding site" evidence="1">
    <location>
        <position position="165"/>
    </location>
    <ligand>
        <name>S-adenosyl-L-homocysteine</name>
        <dbReference type="ChEBI" id="CHEBI:57856"/>
    </ligand>
</feature>
<feature type="binding site" evidence="1">
    <location>
        <position position="165"/>
    </location>
    <ligand>
        <name>S-adenosyl-L-methionine</name>
        <dbReference type="ChEBI" id="CHEBI:59789"/>
    </ligand>
</feature>
<feature type="binding site" evidence="1">
    <location>
        <position position="191"/>
    </location>
    <ligand>
        <name>S-adenosyl-L-homocysteine</name>
        <dbReference type="ChEBI" id="CHEBI:57856"/>
    </ligand>
</feature>
<feature type="binding site" evidence="1">
    <location>
        <position position="191"/>
    </location>
    <ligand>
        <name>S-adenosyl-L-methionine</name>
        <dbReference type="ChEBI" id="CHEBI:59789"/>
    </ligand>
</feature>
<feature type="binding site" evidence="1">
    <location>
        <position position="212"/>
    </location>
    <ligand>
        <name>S-adenosyl-L-homocysteine</name>
        <dbReference type="ChEBI" id="CHEBI:57856"/>
    </ligand>
</feature>
<feature type="binding site" evidence="1">
    <location>
        <position position="212"/>
    </location>
    <ligand>
        <name>S-adenosyl-L-methionine</name>
        <dbReference type="ChEBI" id="CHEBI:59789"/>
    </ligand>
</feature>
<feature type="splice variant" id="VSP_008484" description="In isoform 2." evidence="6">
    <location>
        <begin position="1"/>
        <end position="79"/>
    </location>
</feature>
<feature type="splice variant" id="VSP_008483" description="In isoform 3." evidence="5">
    <original>MLTTSSSTMLGKYGWQILRRLASKSWEHTRQRKKPSGAGSRVLTDAREVFEF</original>
    <variation>MSDNPAAENEKRPQFGTRLLTDADDVFKH</variation>
    <location>
        <begin position="1"/>
        <end position="52"/>
    </location>
</feature>
<gene>
    <name evidence="7" type="primary">Mettl2</name>
    <name evidence="4" type="synonym">metl</name>
    <name evidence="7" type="ORF">CG13929</name>
</gene>